<organism>
    <name type="scientific">Oryza sativa subsp. japonica</name>
    <name type="common">Rice</name>
    <dbReference type="NCBI Taxonomy" id="39947"/>
    <lineage>
        <taxon>Eukaryota</taxon>
        <taxon>Viridiplantae</taxon>
        <taxon>Streptophyta</taxon>
        <taxon>Embryophyta</taxon>
        <taxon>Tracheophyta</taxon>
        <taxon>Spermatophyta</taxon>
        <taxon>Magnoliopsida</taxon>
        <taxon>Liliopsida</taxon>
        <taxon>Poales</taxon>
        <taxon>Poaceae</taxon>
        <taxon>BOP clade</taxon>
        <taxon>Oryzoideae</taxon>
        <taxon>Oryzeae</taxon>
        <taxon>Oryzinae</taxon>
        <taxon>Oryza</taxon>
        <taxon>Oryza sativa</taxon>
    </lineage>
</organism>
<dbReference type="EC" id="3.6.4.13"/>
<dbReference type="EMBL" id="AC099401">
    <property type="protein sequence ID" value="AAN06835.1"/>
    <property type="status" value="ALT_SEQ"/>
    <property type="molecule type" value="Genomic_DNA"/>
</dbReference>
<dbReference type="EMBL" id="DP000009">
    <property type="protein sequence ID" value="ABF94071.1"/>
    <property type="molecule type" value="Genomic_DNA"/>
</dbReference>
<dbReference type="EMBL" id="AP008209">
    <property type="protein sequence ID" value="BAF10934.2"/>
    <property type="status" value="ALT_SEQ"/>
    <property type="molecule type" value="Genomic_DNA"/>
</dbReference>
<dbReference type="EMBL" id="AP014959">
    <property type="protein sequence ID" value="BAS82383.1"/>
    <property type="molecule type" value="Genomic_DNA"/>
</dbReference>
<dbReference type="RefSeq" id="XP_015631989.1">
    <property type="nucleotide sequence ID" value="XM_015776503.1"/>
</dbReference>
<dbReference type="SMR" id="Q10RI7"/>
<dbReference type="FunCoup" id="Q10RI7">
    <property type="interactions" value="2372"/>
</dbReference>
<dbReference type="STRING" id="39947.Q10RI7"/>
<dbReference type="PaxDb" id="39947-Q10RI7"/>
<dbReference type="EnsemblPlants" id="Os03t0158200-01">
    <property type="protein sequence ID" value="Os03t0158200-01"/>
    <property type="gene ID" value="Os03g0158200"/>
</dbReference>
<dbReference type="Gramene" id="Os03t0158200-01">
    <property type="protein sequence ID" value="Os03t0158200-01"/>
    <property type="gene ID" value="Os03g0158200"/>
</dbReference>
<dbReference type="KEGG" id="dosa:Os03g0158200"/>
<dbReference type="eggNOG" id="KOG0332">
    <property type="taxonomic scope" value="Eukaryota"/>
</dbReference>
<dbReference type="HOGENOM" id="CLU_003041_1_0_1"/>
<dbReference type="InParanoid" id="Q10RI7"/>
<dbReference type="OMA" id="DFKNLCM"/>
<dbReference type="OrthoDB" id="10265785at2759"/>
<dbReference type="Proteomes" id="UP000000763">
    <property type="component" value="Chromosome 3"/>
</dbReference>
<dbReference type="Proteomes" id="UP000059680">
    <property type="component" value="Chromosome 3"/>
</dbReference>
<dbReference type="GO" id="GO:0010494">
    <property type="term" value="C:cytoplasmic stress granule"/>
    <property type="evidence" value="ECO:0000318"/>
    <property type="project" value="GO_Central"/>
</dbReference>
<dbReference type="GO" id="GO:0005635">
    <property type="term" value="C:nuclear envelope"/>
    <property type="evidence" value="ECO:0007669"/>
    <property type="project" value="EnsemblPlants"/>
</dbReference>
<dbReference type="GO" id="GO:0005634">
    <property type="term" value="C:nucleus"/>
    <property type="evidence" value="ECO:0000318"/>
    <property type="project" value="GO_Central"/>
</dbReference>
<dbReference type="GO" id="GO:0005524">
    <property type="term" value="F:ATP binding"/>
    <property type="evidence" value="ECO:0007669"/>
    <property type="project" value="UniProtKB-KW"/>
</dbReference>
<dbReference type="GO" id="GO:0016887">
    <property type="term" value="F:ATP hydrolysis activity"/>
    <property type="evidence" value="ECO:0007669"/>
    <property type="project" value="RHEA"/>
</dbReference>
<dbReference type="GO" id="GO:0003729">
    <property type="term" value="F:mRNA binding"/>
    <property type="evidence" value="ECO:0000318"/>
    <property type="project" value="GO_Central"/>
</dbReference>
<dbReference type="GO" id="GO:0003724">
    <property type="term" value="F:RNA helicase activity"/>
    <property type="evidence" value="ECO:0000318"/>
    <property type="project" value="GO_Central"/>
</dbReference>
<dbReference type="GO" id="GO:0016973">
    <property type="term" value="P:poly(A)+ mRNA export from nucleus"/>
    <property type="evidence" value="ECO:0000318"/>
    <property type="project" value="GO_Central"/>
</dbReference>
<dbReference type="GO" id="GO:0009737">
    <property type="term" value="P:response to abscisic acid"/>
    <property type="evidence" value="ECO:0007669"/>
    <property type="project" value="EnsemblPlants"/>
</dbReference>
<dbReference type="GO" id="GO:0009409">
    <property type="term" value="P:response to cold"/>
    <property type="evidence" value="ECO:0007669"/>
    <property type="project" value="EnsemblPlants"/>
</dbReference>
<dbReference type="GO" id="GO:0009408">
    <property type="term" value="P:response to heat"/>
    <property type="evidence" value="ECO:0007669"/>
    <property type="project" value="EnsemblPlants"/>
</dbReference>
<dbReference type="CDD" id="cd17963">
    <property type="entry name" value="DEADc_DDX19_DDX25"/>
    <property type="match status" value="1"/>
</dbReference>
<dbReference type="CDD" id="cd18787">
    <property type="entry name" value="SF2_C_DEAD"/>
    <property type="match status" value="1"/>
</dbReference>
<dbReference type="Gene3D" id="3.40.50.300">
    <property type="entry name" value="P-loop containing nucleotide triphosphate hydrolases"/>
    <property type="match status" value="2"/>
</dbReference>
<dbReference type="InterPro" id="IPR011545">
    <property type="entry name" value="DEAD/DEAH_box_helicase_dom"/>
</dbReference>
<dbReference type="InterPro" id="IPR014001">
    <property type="entry name" value="Helicase_ATP-bd"/>
</dbReference>
<dbReference type="InterPro" id="IPR001650">
    <property type="entry name" value="Helicase_C-like"/>
</dbReference>
<dbReference type="InterPro" id="IPR027417">
    <property type="entry name" value="P-loop_NTPase"/>
</dbReference>
<dbReference type="InterPro" id="IPR014014">
    <property type="entry name" value="RNA_helicase_DEAD_Q_motif"/>
</dbReference>
<dbReference type="PANTHER" id="PTHR47958">
    <property type="entry name" value="ATP-DEPENDENT RNA HELICASE DBP3"/>
    <property type="match status" value="1"/>
</dbReference>
<dbReference type="Pfam" id="PF00270">
    <property type="entry name" value="DEAD"/>
    <property type="match status" value="1"/>
</dbReference>
<dbReference type="Pfam" id="PF00271">
    <property type="entry name" value="Helicase_C"/>
    <property type="match status" value="1"/>
</dbReference>
<dbReference type="SMART" id="SM00487">
    <property type="entry name" value="DEXDc"/>
    <property type="match status" value="1"/>
</dbReference>
<dbReference type="SMART" id="SM00490">
    <property type="entry name" value="HELICc"/>
    <property type="match status" value="1"/>
</dbReference>
<dbReference type="SUPFAM" id="SSF52540">
    <property type="entry name" value="P-loop containing nucleoside triphosphate hydrolases"/>
    <property type="match status" value="1"/>
</dbReference>
<dbReference type="PROSITE" id="PS51192">
    <property type="entry name" value="HELICASE_ATP_BIND_1"/>
    <property type="match status" value="1"/>
</dbReference>
<dbReference type="PROSITE" id="PS51194">
    <property type="entry name" value="HELICASE_CTER"/>
    <property type="match status" value="1"/>
</dbReference>
<dbReference type="PROSITE" id="PS51195">
    <property type="entry name" value="Q_MOTIF"/>
    <property type="match status" value="1"/>
</dbReference>
<feature type="chain" id="PRO_0000282472" description="DEAD-box ATP-dependent RNA helicase 38">
    <location>
        <begin position="1"/>
        <end position="505"/>
    </location>
</feature>
<feature type="domain" description="Helicase ATP-binding" evidence="2">
    <location>
        <begin position="134"/>
        <end position="310"/>
    </location>
</feature>
<feature type="domain" description="Helicase C-terminal" evidence="3">
    <location>
        <begin position="338"/>
        <end position="493"/>
    </location>
</feature>
<feature type="region of interest" description="Disordered" evidence="4">
    <location>
        <begin position="1"/>
        <end position="81"/>
    </location>
</feature>
<feature type="short sequence motif" description="Q motif">
    <location>
        <begin position="100"/>
        <end position="129"/>
    </location>
</feature>
<feature type="short sequence motif" description="DEAD box">
    <location>
        <begin position="254"/>
        <end position="257"/>
    </location>
</feature>
<feature type="compositionally biased region" description="Low complexity" evidence="4">
    <location>
        <begin position="27"/>
        <end position="44"/>
    </location>
</feature>
<feature type="binding site" evidence="2">
    <location>
        <begin position="147"/>
        <end position="154"/>
    </location>
    <ligand>
        <name>ATP</name>
        <dbReference type="ChEBI" id="CHEBI:30616"/>
    </ligand>
</feature>
<gene>
    <name type="ordered locus">Os03g0158200</name>
    <name type="ordered locus">LOC_Os03g06220</name>
    <name type="ORF">OJ1134F05.6</name>
</gene>
<sequence length="505" mass="55855">MADGGKPPTPEKKSWADVEEEEEAKAKAAAAAEAASSSSSNEPAVDAQAKQIEALSLSVPEEHGGSGGGGDDQGPPLLDDSDESQIQAVTSGGTVYESAAAFEDLKLTPELLKGLHDEMGFSRPSKIQAVTLPMILTPPYKDLIAQAHNGSGKTTCFVLGMLSRVDPNRKVTQAICICPTRELAQQNKSVLMRMGKFTGITCACAIPPAQKDYVPIAKMPKITDQVVIGTSGTLMKWINHKKILTNDIKILVFDEADHMLAEDGFRSDSERIMRDIQRSAGGCQVLLFSATFNERVKDFVTRVIKDGNQIFVKKEELTLEKVKQYKVQVPDERAKIAVIKDKIFEFGQKVGQVIIFVRTKQSTKDVHNALTLEDYVCSSIQGSLDQSEREKIIQEFKNGYTKVLISTDVLARGFDQAQVNLVINYDMPIKFGTRDEPDYEVYLHRIGRAGRFGRKGAVFNLLCGETDNTVMRKIETYFQHNVPEVRNWQSEEDFERALKDAGLVE</sequence>
<proteinExistence type="inferred from homology"/>
<evidence type="ECO:0000250" key="1"/>
<evidence type="ECO:0000255" key="2">
    <source>
        <dbReference type="PROSITE-ProRule" id="PRU00541"/>
    </source>
</evidence>
<evidence type="ECO:0000255" key="3">
    <source>
        <dbReference type="PROSITE-ProRule" id="PRU00542"/>
    </source>
</evidence>
<evidence type="ECO:0000256" key="4">
    <source>
        <dbReference type="SAM" id="MobiDB-lite"/>
    </source>
</evidence>
<evidence type="ECO:0000305" key="5"/>
<keyword id="KW-0067">ATP-binding</keyword>
<keyword id="KW-0963">Cytoplasm</keyword>
<keyword id="KW-0347">Helicase</keyword>
<keyword id="KW-0378">Hydrolase</keyword>
<keyword id="KW-0509">mRNA transport</keyword>
<keyword id="KW-0547">Nucleotide-binding</keyword>
<keyword id="KW-0539">Nucleus</keyword>
<keyword id="KW-1185">Reference proteome</keyword>
<keyword id="KW-0694">RNA-binding</keyword>
<keyword id="KW-0813">Transport</keyword>
<accession>Q10RI7</accession>
<accession>A0A0P0VTA7</accession>
<accession>Q8H8C3</accession>
<comment type="function">
    <text evidence="1">ATP-dependent RNA helicase essential for mRNA export from the nucleus. Plays an important role in the positive regulation of CBF/DREB transcription factors (By similarity).</text>
</comment>
<comment type="catalytic activity">
    <reaction>
        <text>ATP + H2O = ADP + phosphate + H(+)</text>
        <dbReference type="Rhea" id="RHEA:13065"/>
        <dbReference type="ChEBI" id="CHEBI:15377"/>
        <dbReference type="ChEBI" id="CHEBI:15378"/>
        <dbReference type="ChEBI" id="CHEBI:30616"/>
        <dbReference type="ChEBI" id="CHEBI:43474"/>
        <dbReference type="ChEBI" id="CHEBI:456216"/>
        <dbReference type="EC" id="3.6.4.13"/>
    </reaction>
</comment>
<comment type="subcellular location">
    <subcellularLocation>
        <location>Cytoplasm</location>
    </subcellularLocation>
    <subcellularLocation>
        <location evidence="1">Nucleus</location>
    </subcellularLocation>
</comment>
<comment type="domain">
    <text>The Q motif is unique to and characteristic of the DEAD box family of RNA helicases and controls ATP binding and hydrolysis.</text>
</comment>
<comment type="similarity">
    <text evidence="5">Belongs to the DEAD box helicase family. DDX19/DBP5 subfamily.</text>
</comment>
<comment type="sequence caution" evidence="5">
    <conflict type="erroneous gene model prediction">
        <sequence resource="EMBL-CDS" id="AAN06835"/>
    </conflict>
</comment>
<comment type="sequence caution" evidence="5">
    <conflict type="erroneous gene model prediction">
        <sequence resource="EMBL-CDS" id="BAF10934"/>
    </conflict>
</comment>
<reference key="1">
    <citation type="journal article" date="2005" name="Genome Res.">
        <title>Sequence, annotation, and analysis of synteny between rice chromosome 3 and diverged grass species.</title>
        <authorList>
            <consortium name="The rice chromosome 3 sequencing consortium"/>
            <person name="Buell C.R."/>
            <person name="Yuan Q."/>
            <person name="Ouyang S."/>
            <person name="Liu J."/>
            <person name="Zhu W."/>
            <person name="Wang A."/>
            <person name="Maiti R."/>
            <person name="Haas B."/>
            <person name="Wortman J."/>
            <person name="Pertea M."/>
            <person name="Jones K.M."/>
            <person name="Kim M."/>
            <person name="Overton L."/>
            <person name="Tsitrin T."/>
            <person name="Fadrosh D."/>
            <person name="Bera J."/>
            <person name="Weaver B."/>
            <person name="Jin S."/>
            <person name="Johri S."/>
            <person name="Reardon M."/>
            <person name="Webb K."/>
            <person name="Hill J."/>
            <person name="Moffat K."/>
            <person name="Tallon L."/>
            <person name="Van Aken S."/>
            <person name="Lewis M."/>
            <person name="Utterback T."/>
            <person name="Feldblyum T."/>
            <person name="Zismann V."/>
            <person name="Iobst S."/>
            <person name="Hsiao J."/>
            <person name="de Vazeille A.R."/>
            <person name="Salzberg S.L."/>
            <person name="White O."/>
            <person name="Fraser C.M."/>
            <person name="Yu Y."/>
            <person name="Kim H."/>
            <person name="Rambo T."/>
            <person name="Currie J."/>
            <person name="Collura K."/>
            <person name="Kernodle-Thompson S."/>
            <person name="Wei F."/>
            <person name="Kudrna K."/>
            <person name="Ammiraju J.S.S."/>
            <person name="Luo M."/>
            <person name="Goicoechea J.L."/>
            <person name="Wing R.A."/>
            <person name="Henry D."/>
            <person name="Oates R."/>
            <person name="Palmer M."/>
            <person name="Pries G."/>
            <person name="Saski C."/>
            <person name="Simmons J."/>
            <person name="Soderlund C."/>
            <person name="Nelson W."/>
            <person name="de la Bastide M."/>
            <person name="Spiegel L."/>
            <person name="Nascimento L."/>
            <person name="Huang E."/>
            <person name="Preston R."/>
            <person name="Zutavern T."/>
            <person name="Palmer L."/>
            <person name="O'Shaughnessy A."/>
            <person name="Dike S."/>
            <person name="McCombie W.R."/>
            <person name="Minx P."/>
            <person name="Cordum H."/>
            <person name="Wilson R."/>
            <person name="Jin W."/>
            <person name="Lee H.R."/>
            <person name="Jiang J."/>
            <person name="Jackson S."/>
        </authorList>
    </citation>
    <scope>NUCLEOTIDE SEQUENCE [LARGE SCALE GENOMIC DNA]</scope>
    <source>
        <strain>cv. Nipponbare</strain>
    </source>
</reference>
<reference key="2">
    <citation type="journal article" date="2005" name="Nature">
        <title>The map-based sequence of the rice genome.</title>
        <authorList>
            <consortium name="International rice genome sequencing project (IRGSP)"/>
        </authorList>
    </citation>
    <scope>NUCLEOTIDE SEQUENCE [LARGE SCALE GENOMIC DNA]</scope>
    <source>
        <strain>cv. Nipponbare</strain>
    </source>
</reference>
<reference key="3">
    <citation type="journal article" date="2008" name="Nucleic Acids Res.">
        <title>The rice annotation project database (RAP-DB): 2008 update.</title>
        <authorList>
            <consortium name="The rice annotation project (RAP)"/>
        </authorList>
    </citation>
    <scope>GENOME REANNOTATION</scope>
    <source>
        <strain>cv. Nipponbare</strain>
    </source>
</reference>
<reference key="4">
    <citation type="journal article" date="2013" name="Rice">
        <title>Improvement of the Oryza sativa Nipponbare reference genome using next generation sequence and optical map data.</title>
        <authorList>
            <person name="Kawahara Y."/>
            <person name="de la Bastide M."/>
            <person name="Hamilton J.P."/>
            <person name="Kanamori H."/>
            <person name="McCombie W.R."/>
            <person name="Ouyang S."/>
            <person name="Schwartz D.C."/>
            <person name="Tanaka T."/>
            <person name="Wu J."/>
            <person name="Zhou S."/>
            <person name="Childs K.L."/>
            <person name="Davidson R.M."/>
            <person name="Lin H."/>
            <person name="Quesada-Ocampo L."/>
            <person name="Vaillancourt B."/>
            <person name="Sakai H."/>
            <person name="Lee S.S."/>
            <person name="Kim J."/>
            <person name="Numa H."/>
            <person name="Itoh T."/>
            <person name="Buell C.R."/>
            <person name="Matsumoto T."/>
        </authorList>
    </citation>
    <scope>GENOME REANNOTATION</scope>
    <source>
        <strain>cv. Nipponbare</strain>
    </source>
</reference>
<name>RH38_ORYSJ</name>
<protein>
    <recommendedName>
        <fullName>DEAD-box ATP-dependent RNA helicase 38</fullName>
        <ecNumber>3.6.4.13</ecNumber>
    </recommendedName>
</protein>